<reference key="1">
    <citation type="journal article" date="1998" name="Nature">
        <title>Deciphering the biology of Mycobacterium tuberculosis from the complete genome sequence.</title>
        <authorList>
            <person name="Cole S.T."/>
            <person name="Brosch R."/>
            <person name="Parkhill J."/>
            <person name="Garnier T."/>
            <person name="Churcher C.M."/>
            <person name="Harris D.E."/>
            <person name="Gordon S.V."/>
            <person name="Eiglmeier K."/>
            <person name="Gas S."/>
            <person name="Barry C.E. III"/>
            <person name="Tekaia F."/>
            <person name="Badcock K."/>
            <person name="Basham D."/>
            <person name="Brown D."/>
            <person name="Chillingworth T."/>
            <person name="Connor R."/>
            <person name="Davies R.M."/>
            <person name="Devlin K."/>
            <person name="Feltwell T."/>
            <person name="Gentles S."/>
            <person name="Hamlin N."/>
            <person name="Holroyd S."/>
            <person name="Hornsby T."/>
            <person name="Jagels K."/>
            <person name="Krogh A."/>
            <person name="McLean J."/>
            <person name="Moule S."/>
            <person name="Murphy L.D."/>
            <person name="Oliver S."/>
            <person name="Osborne J."/>
            <person name="Quail M.A."/>
            <person name="Rajandream M.A."/>
            <person name="Rogers J."/>
            <person name="Rutter S."/>
            <person name="Seeger K."/>
            <person name="Skelton S."/>
            <person name="Squares S."/>
            <person name="Squares R."/>
            <person name="Sulston J.E."/>
            <person name="Taylor K."/>
            <person name="Whitehead S."/>
            <person name="Barrell B.G."/>
        </authorList>
    </citation>
    <scope>NUCLEOTIDE SEQUENCE [LARGE SCALE GENOMIC DNA]</scope>
    <source>
        <strain>ATCC 25618 / H37Rv</strain>
    </source>
</reference>
<reference key="2">
    <citation type="journal article" date="2002" name="Microbiology">
        <title>Re-annotation of the genome sequence of Mycobacterium tuberculosis H37Rv.</title>
        <authorList>
            <person name="Camus J.-C."/>
            <person name="Pryor M.J."/>
            <person name="Medigue C."/>
            <person name="Cole S.T."/>
        </authorList>
    </citation>
    <scope>SEQUENCE REVISION</scope>
</reference>
<reference key="3">
    <citation type="journal article" date="2009" name="Biochem. J.">
        <title>Mycobacterium tuberculosis PtkA is a novel protein tyrosine kinase whose substrate is PtpA.</title>
        <authorList>
            <person name="Bach H."/>
            <person name="Wong D."/>
            <person name="Av-Gay Y."/>
        </authorList>
    </citation>
    <scope>FUNCTION</scope>
    <scope>CATALYTIC ACTIVITY</scope>
    <scope>BIOPHYSICOCHEMICAL PROPERTIES</scope>
    <scope>INTERACTION WITH PTPA</scope>
    <scope>PHOSPHORYLATION AT TYR-262</scope>
    <scope>MUTAGENESIS OF ASP-85; TYR-146; TYR-150; LYS-184; LYS-217; TYR-262 AND LYS-270</scope>
    <source>
        <strain>H37Rv</strain>
    </source>
</reference>
<reference key="4">
    <citation type="journal article" date="2011" name="Mol. Cell. Proteomics">
        <title>Proteogenomic analysis of Mycobacterium tuberculosis by high resolution mass spectrometry.</title>
        <authorList>
            <person name="Kelkar D.S."/>
            <person name="Kumar D."/>
            <person name="Kumar P."/>
            <person name="Balakrishnan L."/>
            <person name="Muthusamy B."/>
            <person name="Yadav A.K."/>
            <person name="Shrivastava P."/>
            <person name="Marimuthu A."/>
            <person name="Anand S."/>
            <person name="Sundaram H."/>
            <person name="Kingsbury R."/>
            <person name="Harsha H.C."/>
            <person name="Nair B."/>
            <person name="Prasad T.S."/>
            <person name="Chauhan D.S."/>
            <person name="Katoch K."/>
            <person name="Katoch V.M."/>
            <person name="Kumar P."/>
            <person name="Chaerkady R."/>
            <person name="Ramachandran S."/>
            <person name="Dash D."/>
            <person name="Pandey A."/>
        </authorList>
    </citation>
    <scope>IDENTIFICATION BY MASS SPECTROMETRY [LARGE SCALE ANALYSIS]</scope>
    <source>
        <strain>ATCC 25618 / H37Rv</strain>
    </source>
</reference>
<reference key="5">
    <citation type="journal article" date="2012" name="J. Biol. Chem.">
        <title>The apo-structure of the low molecular weight protein-tyrosine phosphatase A (MptpA) from Mycobacterium tuberculosis allows for better target-specific drug development.</title>
        <authorList>
            <person name="Stehle T."/>
            <person name="Sreeramulu S."/>
            <person name="Lohr F."/>
            <person name="Richter C."/>
            <person name="Saxena K."/>
            <person name="Jonker H.R."/>
            <person name="Schwalbe H."/>
        </authorList>
    </citation>
    <scope>FUNCTION</scope>
    <scope>CATALYTIC ACTIVITY</scope>
    <scope>INTERACTION WITH PTPA</scope>
    <scope>AUTOPHOSPHORYLATION</scope>
</reference>
<reference key="6">
    <citation type="journal article" date="2015" name="FEBS Lett.">
        <title>Phosphorylation control of protein tyrosine phosphatase A activity in Mycobacterium tuberculosis.</title>
        <authorList>
            <person name="Zhou P."/>
            <person name="Li W."/>
            <person name="Wong D."/>
            <person name="Xie J."/>
            <person name="Av-Gay Y."/>
        </authorList>
    </citation>
    <scope>FUNCTION</scope>
    <scope>CATALYTIC ACTIVITY</scope>
    <scope>MUTAGENESIS OF TYR-262</scope>
</reference>
<reference key="7">
    <citation type="journal article" date="2015" name="Biochem. Biophys. Res. Commun.">
        <title>Phosphorylation of Mycobacterium tuberculosis protein tyrosine kinase A PtkA by Ser/Thr protein kinases.</title>
        <authorList>
            <person name="Zhou P."/>
            <person name="Wong D."/>
            <person name="Li W."/>
            <person name="Xie J."/>
            <person name="Av-Gay Y."/>
        </authorList>
    </citation>
    <scope>ACTIVITY REGULATION</scope>
    <scope>PHOSPHORYLATION BY ESTPKS</scope>
    <scope>INTERACTION WITH ESTPKS</scope>
</reference>
<reference key="8">
    <citation type="journal article" date="2018" name="Sci. Rep.">
        <title>Protein tyrosine kinase, PtkA, is required for Mycobacterium tuberculosis growth in macrophages.</title>
        <authorList>
            <person name="Wong D."/>
            <person name="Li W."/>
            <person name="Chao J.D."/>
            <person name="Zhou P."/>
            <person name="Narula G."/>
            <person name="Tsui C."/>
            <person name="Ko M."/>
            <person name="Xie J."/>
            <person name="Martinez-Frailes C."/>
            <person name="Av-Gay Y."/>
        </authorList>
    </citation>
    <scope>FUNCTION</scope>
    <scope>CATALYTIC ACTIVITY</scope>
    <scope>INTERACTION WITH TRXB</scope>
    <scope>DISRUPTION PHENOTYPE</scope>
</reference>
<reference key="9">
    <citation type="journal article" date="2018" name="FEBS Lett.">
        <title>Structural characterization of the intrinsically disordered domain of Mycobacterium tuberculosis protein tyrosine kinase A.</title>
        <authorList>
            <person name="Niesteruk A."/>
            <person name="Hutchison M."/>
            <person name="Sreeramulu S."/>
            <person name="Jonker H.R.A."/>
            <person name="Richter C."/>
            <person name="Abele R."/>
            <person name="Bock C."/>
            <person name="Schwalbe H."/>
        </authorList>
    </citation>
    <scope>PHOSPHORYLATION</scope>
    <scope>ACTIVITY REGULATION</scope>
    <scope>DOMAIN</scope>
</reference>
<reference key="10">
    <citation type="journal article" date="2019" name="J. Drug. Target.">
        <title>Mycobacterial protein tyrosine kinase, PtkA phosphorylates PtpA at tyrosine residues and the mechanism is stalled by the novel series of inhibitors.</title>
        <authorList>
            <person name="Jaiswal S."/>
            <person name="Chatterjee A."/>
            <person name="Pandey S."/>
            <person name="Lata K."/>
            <person name="Gadi R.K."/>
            <person name="Manda R."/>
            <person name="Kumar S."/>
            <person name="Reddy M.S."/>
            <person name="Ramachandran R."/>
            <person name="Srivastava K.K."/>
        </authorList>
    </citation>
    <scope>FUNCTION</scope>
    <scope>CATALYTIC ACTIVITY</scope>
    <scope>INTERACTION WITH PTPA</scope>
    <scope>BIOTECHNOLOGY</scope>
</reference>
<reference key="11">
    <citation type="journal article" date="2020" name="Sci. Rep.">
        <title>Long-range replica exchange molecular dynamics guided drug repurposing against tyrosine kinase PtkA of Mycobacterium tuberculosis.</title>
        <authorList>
            <person name="Nagpal P."/>
            <person name="Jamal S."/>
            <person name="Singh H."/>
            <person name="Ali W."/>
            <person name="Tanweer S."/>
            <person name="Sharma R."/>
            <person name="Grover A."/>
            <person name="Grover S."/>
        </authorList>
    </citation>
    <scope>DOMAIN</scope>
</reference>
<reference evidence="13" key="12">
    <citation type="journal article" date="2018" name="J. Biol. Chem.">
        <title>The domain architecture of PtkA, the first tyrosine kinase from Mycobacterium tuberculosis, differs from the conventional kinase architecture.</title>
        <authorList>
            <person name="Niesteruk A."/>
            <person name="Jonker H.R.A."/>
            <person name="Richter C."/>
            <person name="Linhard V."/>
            <person name="Sreeramulu S."/>
            <person name="Schwalbe H."/>
        </authorList>
    </citation>
    <scope>STRUCTURE BY NMR OF 76-291</scope>
    <scope>PHOSPHORYLATION AT TYR-262</scope>
    <scope>ACTIVITY REGULATION</scope>
    <scope>DOMAIN</scope>
</reference>
<feature type="chain" id="PRO_0000108066" description="Tyrosine-protein kinase PtkA">
    <location>
        <begin position="1"/>
        <end position="291"/>
    </location>
</feature>
<feature type="region of interest" description="Disordered" evidence="1">
    <location>
        <begin position="1"/>
        <end position="79"/>
    </location>
</feature>
<feature type="compositionally biased region" description="Polar residues" evidence="1">
    <location>
        <begin position="23"/>
        <end position="60"/>
    </location>
</feature>
<feature type="modified residue" description="Phosphotyrosine; by autocatalysis" evidence="2">
    <location>
        <position position="262"/>
    </location>
</feature>
<feature type="mutagenesis site" description="Significant decrease in ATP binding affinity and autophosphorylation efficiency. Decreases interaction with PtpA." evidence="2">
    <original>D</original>
    <variation>A</variation>
    <location>
        <position position="85"/>
    </location>
</feature>
<feature type="mutagenesis site" description="Does not affect autophosphorylation." evidence="2">
    <original>Y</original>
    <variation>A</variation>
    <location>
        <position position="146"/>
    </location>
</feature>
<feature type="mutagenesis site" description="Does not affect autophosphorylation." evidence="2">
    <original>Y</original>
    <variation>A</variation>
    <location>
        <position position="150"/>
    </location>
</feature>
<feature type="mutagenesis site" description="Decreases affinity for ATP and autophosphorylation efficiency." evidence="2">
    <original>K</original>
    <variation>M</variation>
    <location>
        <position position="184"/>
    </location>
</feature>
<feature type="mutagenesis site" description="Decreases affinity for ATP and autophosphorylation efficiency. Decreases interaction with PtpA." evidence="2">
    <original>K</original>
    <variation>M</variation>
    <location>
        <position position="217"/>
    </location>
</feature>
<feature type="mutagenesis site" description="Lack of autophosphorylation. Decreases interaction with PtpA. Cannot phosphorylate and activate PtpA." evidence="2 4">
    <original>Y</original>
    <variation>A</variation>
    <location>
        <position position="262"/>
    </location>
</feature>
<feature type="mutagenesis site" description="Decreases affinity for ATP and autophosphorylation efficiency. Decreases interaction with PtpA." evidence="2">
    <original>K</original>
    <variation>M</variation>
    <location>
        <position position="270"/>
    </location>
</feature>
<feature type="strand" evidence="14">
    <location>
        <begin position="80"/>
        <end position="84"/>
    </location>
</feature>
<feature type="strand" evidence="14">
    <location>
        <begin position="86"/>
        <end position="91"/>
    </location>
</feature>
<feature type="helix" evidence="14">
    <location>
        <begin position="93"/>
        <end position="107"/>
    </location>
</feature>
<feature type="helix" evidence="14">
    <location>
        <begin position="117"/>
        <end position="120"/>
    </location>
</feature>
<feature type="strand" evidence="14">
    <location>
        <begin position="122"/>
        <end position="124"/>
    </location>
</feature>
<feature type="helix" evidence="14">
    <location>
        <begin position="126"/>
        <end position="132"/>
    </location>
</feature>
<feature type="helix" evidence="14">
    <location>
        <begin position="139"/>
        <end position="152"/>
    </location>
</feature>
<feature type="helix" evidence="14">
    <location>
        <begin position="154"/>
        <end position="156"/>
    </location>
</feature>
<feature type="helix" evidence="14">
    <location>
        <begin position="164"/>
        <end position="174"/>
    </location>
</feature>
<feature type="strand" evidence="14">
    <location>
        <begin position="177"/>
        <end position="181"/>
    </location>
</feature>
<feature type="helix" evidence="14">
    <location>
        <begin position="186"/>
        <end position="196"/>
    </location>
</feature>
<feature type="helix" evidence="14">
    <location>
        <begin position="199"/>
        <end position="201"/>
    </location>
</feature>
<feature type="strand" evidence="14">
    <location>
        <begin position="205"/>
        <end position="207"/>
    </location>
</feature>
<feature type="turn" evidence="14">
    <location>
        <begin position="216"/>
        <end position="218"/>
    </location>
</feature>
<feature type="helix" evidence="14">
    <location>
        <begin position="219"/>
        <end position="227"/>
    </location>
</feature>
<feature type="strand" evidence="14">
    <location>
        <begin position="235"/>
        <end position="241"/>
    </location>
</feature>
<feature type="helix" evidence="14">
    <location>
        <begin position="242"/>
        <end position="250"/>
    </location>
</feature>
<feature type="strand" evidence="14">
    <location>
        <begin position="254"/>
        <end position="258"/>
    </location>
</feature>
<feature type="strand" evidence="14">
    <location>
        <begin position="277"/>
        <end position="279"/>
    </location>
</feature>
<feature type="helix" evidence="14">
    <location>
        <begin position="282"/>
        <end position="289"/>
    </location>
</feature>
<comment type="function">
    <text evidence="2 3 4 6 8">Required for growth within macrophages (PubMed:29317718). Catalyzes the phosphorylation of PtpA on the tyrosine residues at positions 128 and 129, thereby increasing PtpA phosphatase activity and promoting pathogenicity (PubMed:19366344, PubMed:22888002, PubMed:25535696, PubMed:29724125). Also phosphorylates the thioredoxin reductase TrxB (PubMed:29317718).</text>
</comment>
<comment type="catalytic activity">
    <reaction evidence="2 3 4 6 8">
        <text>L-tyrosyl-[protein] + ATP = O-phospho-L-tyrosyl-[protein] + ADP + H(+)</text>
        <dbReference type="Rhea" id="RHEA:10596"/>
        <dbReference type="Rhea" id="RHEA-COMP:10136"/>
        <dbReference type="Rhea" id="RHEA-COMP:20101"/>
        <dbReference type="ChEBI" id="CHEBI:15378"/>
        <dbReference type="ChEBI" id="CHEBI:30616"/>
        <dbReference type="ChEBI" id="CHEBI:46858"/>
        <dbReference type="ChEBI" id="CHEBI:61978"/>
        <dbReference type="ChEBI" id="CHEBI:456216"/>
    </reaction>
    <physiologicalReaction direction="left-to-right" evidence="2 3 4 6 8">
        <dbReference type="Rhea" id="RHEA:10597"/>
    </physiologicalReaction>
</comment>
<comment type="activity regulation">
    <text evidence="5 7 9">Activity is increased by phosphorylation.</text>
</comment>
<comment type="biophysicochemical properties">
    <kinetics>
        <KM evidence="2">27.22 nM for ATP (for autophosphorylation reaction)</KM>
        <Vmax evidence="2">1.331 nmol/min/mg enzyme for autophosphorylation reaction</Vmax>
        <text evidence="2">kcat is 0.000973 sec(-1) with ATP as substrate for autophosphorylation reaction.</text>
    </kinetics>
</comment>
<comment type="subunit">
    <text evidence="2 3 5 6 8">Interacts with PtpA (PubMed:19366344, PubMed:22888002, PubMed:29724125). The presence of a phosphate donor increases the interaction affinity (PubMed:19366344). Interacts with TrxB (PubMed:29317718). Interacts with several eukaryotic-like Ser/Thr protein kinases (eSTPKs) in vivo, including PknA (PubMed:26417687).</text>
</comment>
<comment type="domain">
    <text evidence="7 9 10">Composed of two domains: the N-terminal highly flexible intrinsically disordered domain (IDD) and the C-terminal rigid kinase core domain (KCD) (PubMed:29494752, PubMed:29884774, PubMed:32157138). IDD is unstructured and highly dynamic, allowing transient interactions with the rigid KCD. This interaction modulates the accessibility of the KCD active site (PubMed:29884774). In closed state, IDD masks the autophosphorylation site, thereby decreasing the activity of PtkA. In open state conformation, IDD is away from the autophosphorylation site, making it accessible for phosphorylation and activation of PtkA (PubMed:29884774). Phosphorylation of PtkA by serine/threonine kinase induces conformational changes of IDD, which promotes the open state (PubMed:29884774). IDD had a greater inhibitory effect on the catalytic activity of KCD in the presence of the drugs esculin and inosine pranobex (PubMed:32157138).</text>
</comment>
<comment type="PTM">
    <text evidence="2 3 5 7 9">Autophosphorylated (PubMed:19366344, PubMed:22888002, PubMed:29884774). Can be phosphorylated in vitro on threonine residues by several mycobacterial eukaryotic-like Ser/Thr protein kinases (eSTPKs), including PknA, PknD, PknF and PknK. PknD and PknK can enhance PtkA autophosphorylation activity in vitro (PubMed:26417687). Phosphorylated in vitro on serine residues by the eukaryotic serine/threonine kinase PKA (PubMed:29494752).</text>
</comment>
<comment type="disruption phenotype">
    <text evidence="6">Deletion mutant shows impaired intracellular survival within the human THP-1 macrophage infection model, and fails to inhibit phagosome acidification. However, the mutant displays enhanced resistance against oxidative stress in vitro. Disruption of the gene increases secretion of the thioredoxin reductase TrxB.</text>
</comment>
<comment type="biotechnology">
    <text evidence="8">PtkA-PtpA (TK-TP) interaction could be a good target for drug discovery program. Benzylbenzofurans and benzofuranamides disrupt the PtkA-PtpA interaction, which inhibits activation of PtpA and leads to the decrease in intracellular survival of mycobacteria.</text>
</comment>
<comment type="similarity">
    <text evidence="12">Belongs to the HAD-like hydrolase superfamily. CbbY/CbbZ/Gph/YieH family.</text>
</comment>
<protein>
    <recommendedName>
        <fullName evidence="12">Tyrosine-protein kinase PtkA</fullName>
        <ecNumber evidence="2 3 4 6 8">2.7.10.-</ecNumber>
    </recommendedName>
    <alternativeName>
        <fullName evidence="11">Protein tyrosine kinase A</fullName>
    </alternativeName>
</protein>
<evidence type="ECO:0000256" key="1">
    <source>
        <dbReference type="SAM" id="MobiDB-lite"/>
    </source>
</evidence>
<evidence type="ECO:0000269" key="2">
    <source>
    </source>
</evidence>
<evidence type="ECO:0000269" key="3">
    <source>
    </source>
</evidence>
<evidence type="ECO:0000269" key="4">
    <source>
    </source>
</evidence>
<evidence type="ECO:0000269" key="5">
    <source>
    </source>
</evidence>
<evidence type="ECO:0000269" key="6">
    <source>
    </source>
</evidence>
<evidence type="ECO:0000269" key="7">
    <source>
    </source>
</evidence>
<evidence type="ECO:0000269" key="8">
    <source>
    </source>
</evidence>
<evidence type="ECO:0000269" key="9">
    <source>
    </source>
</evidence>
<evidence type="ECO:0000269" key="10">
    <source>
    </source>
</evidence>
<evidence type="ECO:0000303" key="11">
    <source>
    </source>
</evidence>
<evidence type="ECO:0000305" key="12"/>
<evidence type="ECO:0007744" key="13">
    <source>
        <dbReference type="PDB" id="6F2X"/>
    </source>
</evidence>
<evidence type="ECO:0007829" key="14">
    <source>
        <dbReference type="PDB" id="6F2X"/>
    </source>
</evidence>
<proteinExistence type="evidence at protein level"/>
<sequence>MSSPRERRPASQAPRLSRRPPAHQTSRSSPDTTAPTGSGLSNRFVNDNGIVTDTTASGTNCPPPPRAAARRASSPGESPQLVIFDLDGTLTDSARGIVSSFRHALNHIGAPVPEGDLATHIVGPPMHETLRAMGLGESAEEAIVAYRADYSARGWAMNSLFDGIGPLLADLRTAGVRLAVATSKAEPTARRILRHFGIEQHFEVIAGASTDGSRGSKVDVLAHALAQLRPLPERLVMVGDRSHDVDGAAAHGIDTVVVGWGYGRADFIDKTSTTVVTHAATIDELREALGV</sequence>
<organism>
    <name type="scientific">Mycobacterium tuberculosis (strain ATCC 25618 / H37Rv)</name>
    <dbReference type="NCBI Taxonomy" id="83332"/>
    <lineage>
        <taxon>Bacteria</taxon>
        <taxon>Bacillati</taxon>
        <taxon>Actinomycetota</taxon>
        <taxon>Actinomycetes</taxon>
        <taxon>Mycobacteriales</taxon>
        <taxon>Mycobacteriaceae</taxon>
        <taxon>Mycobacterium</taxon>
        <taxon>Mycobacterium tuberculosis complex</taxon>
    </lineage>
</organism>
<dbReference type="EC" id="2.7.10.-" evidence="2 3 4 6 8"/>
<dbReference type="EMBL" id="AL123456">
    <property type="protein sequence ID" value="CCP45012.1"/>
    <property type="molecule type" value="Genomic_DNA"/>
</dbReference>
<dbReference type="PIR" id="D70777">
    <property type="entry name" value="D70777"/>
</dbReference>
<dbReference type="RefSeq" id="NP_216748.2">
    <property type="nucleotide sequence ID" value="NC_000962.3"/>
</dbReference>
<dbReference type="RefSeq" id="WP_003411507.1">
    <property type="nucleotide sequence ID" value="NC_000962.3"/>
</dbReference>
<dbReference type="PDB" id="6F2X">
    <property type="method" value="NMR"/>
    <property type="chains" value="A=76-291"/>
</dbReference>
<dbReference type="PDBsum" id="6F2X"/>
<dbReference type="SMR" id="P9WPI9"/>
<dbReference type="FunCoup" id="P9WPI9">
    <property type="interactions" value="21"/>
</dbReference>
<dbReference type="STRING" id="83332.Rv2232"/>
<dbReference type="iPTMnet" id="P9WPI9"/>
<dbReference type="PaxDb" id="83332-Rv2232"/>
<dbReference type="GeneID" id="887597"/>
<dbReference type="KEGG" id="mtu:Rv2232"/>
<dbReference type="KEGG" id="mtv:RVBD_2232"/>
<dbReference type="PATRIC" id="fig|83332.111.peg.2486"/>
<dbReference type="TubercuList" id="Rv2232"/>
<dbReference type="eggNOG" id="COG0546">
    <property type="taxonomic scope" value="Bacteria"/>
</dbReference>
<dbReference type="InParanoid" id="P9WPI9"/>
<dbReference type="OrthoDB" id="9776368at2"/>
<dbReference type="PhylomeDB" id="P9WPI9"/>
<dbReference type="Proteomes" id="UP000001584">
    <property type="component" value="Chromosome"/>
</dbReference>
<dbReference type="GO" id="GO:0005829">
    <property type="term" value="C:cytosol"/>
    <property type="evidence" value="ECO:0000318"/>
    <property type="project" value="GO_Central"/>
</dbReference>
<dbReference type="GO" id="GO:0005524">
    <property type="term" value="F:ATP binding"/>
    <property type="evidence" value="ECO:0007669"/>
    <property type="project" value="UniProtKB-KW"/>
</dbReference>
<dbReference type="GO" id="GO:0004713">
    <property type="term" value="F:protein tyrosine kinase activity"/>
    <property type="evidence" value="ECO:0000314"/>
    <property type="project" value="UniProtKB"/>
</dbReference>
<dbReference type="CDD" id="cd04302">
    <property type="entry name" value="HAD_5NT"/>
    <property type="match status" value="1"/>
</dbReference>
<dbReference type="DisProt" id="DP01160"/>
<dbReference type="FunFam" id="3.40.50.1000:FF:000022">
    <property type="entry name" value="Phosphoglycolate phosphatase"/>
    <property type="match status" value="1"/>
</dbReference>
<dbReference type="Gene3D" id="3.40.50.1000">
    <property type="entry name" value="HAD superfamily/HAD-like"/>
    <property type="match status" value="1"/>
</dbReference>
<dbReference type="Gene3D" id="1.10.150.240">
    <property type="entry name" value="Putative phosphatase, domain 2"/>
    <property type="match status" value="1"/>
</dbReference>
<dbReference type="InterPro" id="IPR050155">
    <property type="entry name" value="HAD-like_hydrolase_sf"/>
</dbReference>
<dbReference type="InterPro" id="IPR036412">
    <property type="entry name" value="HAD-like_sf"/>
</dbReference>
<dbReference type="InterPro" id="IPR041492">
    <property type="entry name" value="HAD_2"/>
</dbReference>
<dbReference type="InterPro" id="IPR023214">
    <property type="entry name" value="HAD_sf"/>
</dbReference>
<dbReference type="InterPro" id="IPR023198">
    <property type="entry name" value="PGP-like_dom2"/>
</dbReference>
<dbReference type="PANTHER" id="PTHR43434:SF20">
    <property type="entry name" value="5'-NUCLEOTIDASE"/>
    <property type="match status" value="1"/>
</dbReference>
<dbReference type="PANTHER" id="PTHR43434">
    <property type="entry name" value="PHOSPHOGLYCOLATE PHOSPHATASE"/>
    <property type="match status" value="1"/>
</dbReference>
<dbReference type="Pfam" id="PF13419">
    <property type="entry name" value="HAD_2"/>
    <property type="match status" value="1"/>
</dbReference>
<dbReference type="SFLD" id="SFLDG01129">
    <property type="entry name" value="C1.5:_HAD__Beta-PGM__Phosphata"/>
    <property type="match status" value="1"/>
</dbReference>
<dbReference type="SFLD" id="SFLDS00003">
    <property type="entry name" value="Haloacid_Dehalogenase"/>
    <property type="match status" value="1"/>
</dbReference>
<dbReference type="SUPFAM" id="SSF56784">
    <property type="entry name" value="HAD-like"/>
    <property type="match status" value="1"/>
</dbReference>
<name>PTKA_MYCTU</name>
<gene>
    <name evidence="11" type="primary">ptkA</name>
    <name type="ordered locus">Rv2232</name>
    <name type="ORF">MTCY427.13/MTCY427.14</name>
</gene>
<accession>P9WPI9</accession>
<accession>L0TBP3</accession>
<accession>P68911</accession>
<accession>Q10515</accession>
<accession>Q10516</accession>
<keyword id="KW-0002">3D-structure</keyword>
<keyword id="KW-0067">ATP-binding</keyword>
<keyword id="KW-0418">Kinase</keyword>
<keyword id="KW-0547">Nucleotide-binding</keyword>
<keyword id="KW-0597">Phosphoprotein</keyword>
<keyword id="KW-1185">Reference proteome</keyword>
<keyword id="KW-0808">Transferase</keyword>
<keyword id="KW-0829">Tyrosine-protein kinase</keyword>
<keyword id="KW-0843">Virulence</keyword>